<keyword id="KW-0963">Cytoplasm</keyword>
<keyword id="KW-0274">FAD</keyword>
<keyword id="KW-0285">Flavoprotein</keyword>
<keyword id="KW-0520">NAD</keyword>
<keyword id="KW-0819">tRNA processing</keyword>
<organism>
    <name type="scientific">Actinobacillus pleuropneumoniae serotype 7 (strain AP76)</name>
    <dbReference type="NCBI Taxonomy" id="537457"/>
    <lineage>
        <taxon>Bacteria</taxon>
        <taxon>Pseudomonadati</taxon>
        <taxon>Pseudomonadota</taxon>
        <taxon>Gammaproteobacteria</taxon>
        <taxon>Pasteurellales</taxon>
        <taxon>Pasteurellaceae</taxon>
        <taxon>Actinobacillus</taxon>
    </lineage>
</organism>
<reference key="1">
    <citation type="submission" date="2008-06" db="EMBL/GenBank/DDBJ databases">
        <title>Genome and proteome analysis of A. pleuropneumoniae serotype 7.</title>
        <authorList>
            <person name="Linke B."/>
            <person name="Buettner F."/>
            <person name="Martinez-Arias R."/>
            <person name="Goesmann A."/>
            <person name="Baltes N."/>
            <person name="Tegetmeyer H."/>
            <person name="Singh M."/>
            <person name="Gerlach G.F."/>
        </authorList>
    </citation>
    <scope>NUCLEOTIDE SEQUENCE [LARGE SCALE GENOMIC DNA]</scope>
    <source>
        <strain>AP76</strain>
    </source>
</reference>
<feature type="chain" id="PRO_1000095641" description="tRNA uridine 5-carboxymethylaminomethyl modification enzyme MnmG">
    <location>
        <begin position="1"/>
        <end position="630"/>
    </location>
</feature>
<feature type="binding site" evidence="1">
    <location>
        <begin position="13"/>
        <end position="18"/>
    </location>
    <ligand>
        <name>FAD</name>
        <dbReference type="ChEBI" id="CHEBI:57692"/>
    </ligand>
</feature>
<feature type="binding site" evidence="1">
    <location>
        <begin position="273"/>
        <end position="287"/>
    </location>
    <ligand>
        <name>NAD(+)</name>
        <dbReference type="ChEBI" id="CHEBI:57540"/>
    </ligand>
</feature>
<gene>
    <name evidence="1" type="primary">mnmG</name>
    <name evidence="1" type="synonym">gidA</name>
    <name type="ordered locus">APP7_1717</name>
</gene>
<dbReference type="EMBL" id="CP001091">
    <property type="protein sequence ID" value="ACE62369.1"/>
    <property type="molecule type" value="Genomic_DNA"/>
</dbReference>
<dbReference type="RefSeq" id="WP_005618124.1">
    <property type="nucleotide sequence ID" value="NC_010939.1"/>
</dbReference>
<dbReference type="SMR" id="B3H2Q2"/>
<dbReference type="KEGG" id="apa:APP7_1717"/>
<dbReference type="HOGENOM" id="CLU_007831_2_2_6"/>
<dbReference type="Proteomes" id="UP000001226">
    <property type="component" value="Chromosome"/>
</dbReference>
<dbReference type="GO" id="GO:0005829">
    <property type="term" value="C:cytosol"/>
    <property type="evidence" value="ECO:0007669"/>
    <property type="project" value="TreeGrafter"/>
</dbReference>
<dbReference type="GO" id="GO:0050660">
    <property type="term" value="F:flavin adenine dinucleotide binding"/>
    <property type="evidence" value="ECO:0007669"/>
    <property type="project" value="UniProtKB-UniRule"/>
</dbReference>
<dbReference type="GO" id="GO:0030488">
    <property type="term" value="P:tRNA methylation"/>
    <property type="evidence" value="ECO:0007669"/>
    <property type="project" value="TreeGrafter"/>
</dbReference>
<dbReference type="GO" id="GO:0002098">
    <property type="term" value="P:tRNA wobble uridine modification"/>
    <property type="evidence" value="ECO:0007669"/>
    <property type="project" value="InterPro"/>
</dbReference>
<dbReference type="FunFam" id="1.10.10.1800:FF:000001">
    <property type="entry name" value="tRNA uridine 5-carboxymethylaminomethyl modification enzyme MnmG"/>
    <property type="match status" value="1"/>
</dbReference>
<dbReference type="FunFam" id="1.10.150.570:FF:000001">
    <property type="entry name" value="tRNA uridine 5-carboxymethylaminomethyl modification enzyme MnmG"/>
    <property type="match status" value="1"/>
</dbReference>
<dbReference type="FunFam" id="3.50.50.60:FF:000002">
    <property type="entry name" value="tRNA uridine 5-carboxymethylaminomethyl modification enzyme MnmG"/>
    <property type="match status" value="1"/>
</dbReference>
<dbReference type="FunFam" id="3.50.50.60:FF:000010">
    <property type="entry name" value="tRNA uridine 5-carboxymethylaminomethyl modification enzyme MnmG"/>
    <property type="match status" value="1"/>
</dbReference>
<dbReference type="Gene3D" id="3.50.50.60">
    <property type="entry name" value="FAD/NAD(P)-binding domain"/>
    <property type="match status" value="2"/>
</dbReference>
<dbReference type="Gene3D" id="1.10.150.570">
    <property type="entry name" value="GidA associated domain, C-terminal subdomain"/>
    <property type="match status" value="1"/>
</dbReference>
<dbReference type="Gene3D" id="1.10.10.1800">
    <property type="entry name" value="tRNA uridine 5-carboxymethylaminomethyl modification enzyme MnmG/GidA"/>
    <property type="match status" value="1"/>
</dbReference>
<dbReference type="HAMAP" id="MF_00129">
    <property type="entry name" value="MnmG_GidA"/>
    <property type="match status" value="1"/>
</dbReference>
<dbReference type="InterPro" id="IPR036188">
    <property type="entry name" value="FAD/NAD-bd_sf"/>
</dbReference>
<dbReference type="InterPro" id="IPR049312">
    <property type="entry name" value="GIDA_C_N"/>
</dbReference>
<dbReference type="InterPro" id="IPR004416">
    <property type="entry name" value="MnmG"/>
</dbReference>
<dbReference type="InterPro" id="IPR002218">
    <property type="entry name" value="MnmG-rel"/>
</dbReference>
<dbReference type="InterPro" id="IPR020595">
    <property type="entry name" value="MnmG-rel_CS"/>
</dbReference>
<dbReference type="InterPro" id="IPR026904">
    <property type="entry name" value="MnmG_C"/>
</dbReference>
<dbReference type="InterPro" id="IPR047001">
    <property type="entry name" value="MnmG_C_subdom"/>
</dbReference>
<dbReference type="InterPro" id="IPR044920">
    <property type="entry name" value="MnmG_C_subdom_sf"/>
</dbReference>
<dbReference type="InterPro" id="IPR040131">
    <property type="entry name" value="MnmG_N"/>
</dbReference>
<dbReference type="NCBIfam" id="TIGR00136">
    <property type="entry name" value="mnmG_gidA"/>
    <property type="match status" value="1"/>
</dbReference>
<dbReference type="PANTHER" id="PTHR11806">
    <property type="entry name" value="GLUCOSE INHIBITED DIVISION PROTEIN A"/>
    <property type="match status" value="1"/>
</dbReference>
<dbReference type="PANTHER" id="PTHR11806:SF0">
    <property type="entry name" value="PROTEIN MTO1 HOMOLOG, MITOCHONDRIAL"/>
    <property type="match status" value="1"/>
</dbReference>
<dbReference type="Pfam" id="PF01134">
    <property type="entry name" value="GIDA"/>
    <property type="match status" value="1"/>
</dbReference>
<dbReference type="Pfam" id="PF21680">
    <property type="entry name" value="GIDA_C_1st"/>
    <property type="match status" value="1"/>
</dbReference>
<dbReference type="Pfam" id="PF13932">
    <property type="entry name" value="SAM_GIDA_C"/>
    <property type="match status" value="1"/>
</dbReference>
<dbReference type="SMART" id="SM01228">
    <property type="entry name" value="GIDA_assoc_3"/>
    <property type="match status" value="1"/>
</dbReference>
<dbReference type="SUPFAM" id="SSF51905">
    <property type="entry name" value="FAD/NAD(P)-binding domain"/>
    <property type="match status" value="1"/>
</dbReference>
<dbReference type="PROSITE" id="PS01280">
    <property type="entry name" value="GIDA_1"/>
    <property type="match status" value="1"/>
</dbReference>
<dbReference type="PROSITE" id="PS01281">
    <property type="entry name" value="GIDA_2"/>
    <property type="match status" value="1"/>
</dbReference>
<name>MNMG_ACTP7</name>
<protein>
    <recommendedName>
        <fullName evidence="1">tRNA uridine 5-carboxymethylaminomethyl modification enzyme MnmG</fullName>
    </recommendedName>
    <alternativeName>
        <fullName evidence="1">Glucose-inhibited division protein A</fullName>
    </alternativeName>
</protein>
<evidence type="ECO:0000255" key="1">
    <source>
        <dbReference type="HAMAP-Rule" id="MF_00129"/>
    </source>
</evidence>
<accession>B3H2Q2</accession>
<sequence>MIYHEIYDVIVVGGGHAGTEAALAPARMGLKTLLLTHNIDTLGQMSCNPAIGGIGKGHLVKEIDAMGGLMAIAIDQAGIQFRTLNSSKGPAVRATRAQADRVLYRQAVRTALENQPNLDIFQQEVVDILVENNRAVGAVTKMRLTFKARSVVLTAGTFLAGKIHIGLDNYAGGRAGDPAATMLADRLRDLNLRIDRLKTGTPPRLDARTINFDVLAKQHGDAELPVMSFMGSVDLHPRQIPCYITHTNEQTHDLIRNSLDRSPMYTGVIEGIGPRYCPSIEDKVMRFSDRNSHQIYLEPEGLSTIEVYPNGISTSLPFDVQMGIVNSMKGLEKTRIIKPGYAIEYDYFDPRDLKPTLETKAIEGLFFAGQINGTTGYEEAAAQGLLAGINAALQVQGKEAWFPTRDLAYTGVLVDDLCTLGTKEPYRVFTSRAEYRLLLREDNADIRLTPIAHELGLIDDARWARFNQKMENIEREHERLKQIWIHPQSEHLAVVNELVNSPLTREASGEDLLRRPEVTYDKLTQVAAFAPALDDKQAAEQVEISIKYQGYIEHQQNEIERHKRHENTLIPAEFDYDKVESLSNEVRAKLMQHRPVSIGQASRISGITPAAISILLVNLKKQGMLKRGEL</sequence>
<proteinExistence type="inferred from homology"/>
<comment type="function">
    <text evidence="1">NAD-binding protein involved in the addition of a carboxymethylaminomethyl (cmnm) group at the wobble position (U34) of certain tRNAs, forming tRNA-cmnm(5)s(2)U34.</text>
</comment>
<comment type="cofactor">
    <cofactor evidence="1">
        <name>FAD</name>
        <dbReference type="ChEBI" id="CHEBI:57692"/>
    </cofactor>
</comment>
<comment type="subunit">
    <text evidence="1">Homodimer. Heterotetramer of two MnmE and two MnmG subunits.</text>
</comment>
<comment type="subcellular location">
    <subcellularLocation>
        <location evidence="1">Cytoplasm</location>
    </subcellularLocation>
</comment>
<comment type="similarity">
    <text evidence="1">Belongs to the MnmG family.</text>
</comment>